<name>MIAB_RICFE</name>
<reference key="1">
    <citation type="journal article" date="2005" name="PLoS Biol.">
        <title>The genome sequence of Rickettsia felis identifies the first putative conjugative plasmid in an obligate intracellular parasite.</title>
        <authorList>
            <person name="Ogata H."/>
            <person name="Renesto P."/>
            <person name="Audic S."/>
            <person name="Robert C."/>
            <person name="Blanc G."/>
            <person name="Fournier P.-E."/>
            <person name="Parinello H."/>
            <person name="Claverie J.-M."/>
            <person name="Raoult D."/>
        </authorList>
    </citation>
    <scope>NUCLEOTIDE SEQUENCE [LARGE SCALE GENOMIC DNA]</scope>
    <source>
        <strain>ATCC VR-1525 / URRWXCal2</strain>
    </source>
</reference>
<organism>
    <name type="scientific">Rickettsia felis (strain ATCC VR-1525 / URRWXCal2)</name>
    <name type="common">Rickettsia azadi</name>
    <dbReference type="NCBI Taxonomy" id="315456"/>
    <lineage>
        <taxon>Bacteria</taxon>
        <taxon>Pseudomonadati</taxon>
        <taxon>Pseudomonadota</taxon>
        <taxon>Alphaproteobacteria</taxon>
        <taxon>Rickettsiales</taxon>
        <taxon>Rickettsiaceae</taxon>
        <taxon>Rickettsieae</taxon>
        <taxon>Rickettsia</taxon>
        <taxon>spotted fever group</taxon>
    </lineage>
</organism>
<accession>Q4UK06</accession>
<proteinExistence type="inferred from homology"/>
<gene>
    <name evidence="1" type="primary">miaB</name>
    <name type="ordered locus">RF_1278</name>
</gene>
<protein>
    <recommendedName>
        <fullName evidence="1">tRNA-2-methylthio-N(6)-dimethylallyladenosine synthase</fullName>
        <ecNumber evidence="1">2.8.4.3</ecNumber>
    </recommendedName>
    <alternativeName>
        <fullName evidence="1">(Dimethylallyl)adenosine tRNA methylthiotransferase MiaB</fullName>
    </alternativeName>
    <alternativeName>
        <fullName evidence="1">tRNA-i(6)A37 methylthiotransferase</fullName>
    </alternativeName>
</protein>
<feature type="chain" id="PRO_0000374506" description="tRNA-2-methylthio-N(6)-dimethylallyladenosine synthase">
    <location>
        <begin position="1"/>
        <end position="445"/>
    </location>
</feature>
<feature type="domain" description="MTTase N-terminal" evidence="1">
    <location>
        <begin position="3"/>
        <end position="124"/>
    </location>
</feature>
<feature type="domain" description="Radical SAM core" evidence="2">
    <location>
        <begin position="148"/>
        <end position="380"/>
    </location>
</feature>
<feature type="domain" description="TRAM" evidence="1">
    <location>
        <begin position="383"/>
        <end position="445"/>
    </location>
</feature>
<feature type="binding site" evidence="1">
    <location>
        <position position="12"/>
    </location>
    <ligand>
        <name>[4Fe-4S] cluster</name>
        <dbReference type="ChEBI" id="CHEBI:49883"/>
        <label>1</label>
    </ligand>
</feature>
<feature type="binding site" evidence="1">
    <location>
        <position position="48"/>
    </location>
    <ligand>
        <name>[4Fe-4S] cluster</name>
        <dbReference type="ChEBI" id="CHEBI:49883"/>
        <label>1</label>
    </ligand>
</feature>
<feature type="binding site" evidence="1">
    <location>
        <position position="87"/>
    </location>
    <ligand>
        <name>[4Fe-4S] cluster</name>
        <dbReference type="ChEBI" id="CHEBI:49883"/>
        <label>1</label>
    </ligand>
</feature>
<feature type="binding site" evidence="1">
    <location>
        <position position="162"/>
    </location>
    <ligand>
        <name>[4Fe-4S] cluster</name>
        <dbReference type="ChEBI" id="CHEBI:49883"/>
        <label>2</label>
        <note>4Fe-4S-S-AdoMet</note>
    </ligand>
</feature>
<feature type="binding site" evidence="1">
    <location>
        <position position="166"/>
    </location>
    <ligand>
        <name>[4Fe-4S] cluster</name>
        <dbReference type="ChEBI" id="CHEBI:49883"/>
        <label>2</label>
        <note>4Fe-4S-S-AdoMet</note>
    </ligand>
</feature>
<feature type="binding site" evidence="1">
    <location>
        <position position="169"/>
    </location>
    <ligand>
        <name>[4Fe-4S] cluster</name>
        <dbReference type="ChEBI" id="CHEBI:49883"/>
        <label>2</label>
        <note>4Fe-4S-S-AdoMet</note>
    </ligand>
</feature>
<keyword id="KW-0004">4Fe-4S</keyword>
<keyword id="KW-0963">Cytoplasm</keyword>
<keyword id="KW-0408">Iron</keyword>
<keyword id="KW-0411">Iron-sulfur</keyword>
<keyword id="KW-0479">Metal-binding</keyword>
<keyword id="KW-0949">S-adenosyl-L-methionine</keyword>
<keyword id="KW-0808">Transferase</keyword>
<keyword id="KW-0819">tRNA processing</keyword>
<evidence type="ECO:0000255" key="1">
    <source>
        <dbReference type="HAMAP-Rule" id="MF_01864"/>
    </source>
</evidence>
<evidence type="ECO:0000255" key="2">
    <source>
        <dbReference type="PROSITE-ProRule" id="PRU01266"/>
    </source>
</evidence>
<dbReference type="EC" id="2.8.4.3" evidence="1"/>
<dbReference type="EMBL" id="CP000053">
    <property type="protein sequence ID" value="AAY62129.1"/>
    <property type="molecule type" value="Genomic_DNA"/>
</dbReference>
<dbReference type="SMR" id="Q4UK06"/>
<dbReference type="STRING" id="315456.RF_1278"/>
<dbReference type="KEGG" id="rfe:RF_1278"/>
<dbReference type="eggNOG" id="COG0621">
    <property type="taxonomic scope" value="Bacteria"/>
</dbReference>
<dbReference type="HOGENOM" id="CLU_018697_2_2_5"/>
<dbReference type="OrthoDB" id="9805215at2"/>
<dbReference type="Proteomes" id="UP000008548">
    <property type="component" value="Chromosome"/>
</dbReference>
<dbReference type="GO" id="GO:0005829">
    <property type="term" value="C:cytosol"/>
    <property type="evidence" value="ECO:0007669"/>
    <property type="project" value="TreeGrafter"/>
</dbReference>
<dbReference type="GO" id="GO:0051539">
    <property type="term" value="F:4 iron, 4 sulfur cluster binding"/>
    <property type="evidence" value="ECO:0007669"/>
    <property type="project" value="UniProtKB-UniRule"/>
</dbReference>
<dbReference type="GO" id="GO:0046872">
    <property type="term" value="F:metal ion binding"/>
    <property type="evidence" value="ECO:0007669"/>
    <property type="project" value="UniProtKB-KW"/>
</dbReference>
<dbReference type="GO" id="GO:0035597">
    <property type="term" value="F:N6-isopentenyladenosine methylthiotransferase activity"/>
    <property type="evidence" value="ECO:0007669"/>
    <property type="project" value="TreeGrafter"/>
</dbReference>
<dbReference type="CDD" id="cd01335">
    <property type="entry name" value="Radical_SAM"/>
    <property type="match status" value="1"/>
</dbReference>
<dbReference type="FunFam" id="3.40.50.12160:FF:000001">
    <property type="entry name" value="tRNA-2-methylthio-N(6)-dimethylallyladenosine synthase"/>
    <property type="match status" value="1"/>
</dbReference>
<dbReference type="FunFam" id="3.80.30.20:FF:000001">
    <property type="entry name" value="tRNA-2-methylthio-N(6)-dimethylallyladenosine synthase 2"/>
    <property type="match status" value="1"/>
</dbReference>
<dbReference type="Gene3D" id="3.40.50.12160">
    <property type="entry name" value="Methylthiotransferase, N-terminal domain"/>
    <property type="match status" value="1"/>
</dbReference>
<dbReference type="Gene3D" id="3.80.30.20">
    <property type="entry name" value="tm_1862 like domain"/>
    <property type="match status" value="1"/>
</dbReference>
<dbReference type="HAMAP" id="MF_01864">
    <property type="entry name" value="tRNA_metthiotr_MiaB"/>
    <property type="match status" value="1"/>
</dbReference>
<dbReference type="InterPro" id="IPR006638">
    <property type="entry name" value="Elp3/MiaA/NifB-like_rSAM"/>
</dbReference>
<dbReference type="InterPro" id="IPR005839">
    <property type="entry name" value="Methylthiotransferase"/>
</dbReference>
<dbReference type="InterPro" id="IPR020612">
    <property type="entry name" value="Methylthiotransferase_CS"/>
</dbReference>
<dbReference type="InterPro" id="IPR013848">
    <property type="entry name" value="Methylthiotransferase_N"/>
</dbReference>
<dbReference type="InterPro" id="IPR038135">
    <property type="entry name" value="Methylthiotransferase_N_sf"/>
</dbReference>
<dbReference type="InterPro" id="IPR006463">
    <property type="entry name" value="MiaB_methiolase"/>
</dbReference>
<dbReference type="InterPro" id="IPR007197">
    <property type="entry name" value="rSAM"/>
</dbReference>
<dbReference type="InterPro" id="IPR023404">
    <property type="entry name" value="rSAM_horseshoe"/>
</dbReference>
<dbReference type="InterPro" id="IPR002792">
    <property type="entry name" value="TRAM_dom"/>
</dbReference>
<dbReference type="NCBIfam" id="TIGR01574">
    <property type="entry name" value="miaB-methiolase"/>
    <property type="match status" value="1"/>
</dbReference>
<dbReference type="NCBIfam" id="TIGR00089">
    <property type="entry name" value="MiaB/RimO family radical SAM methylthiotransferase"/>
    <property type="match status" value="1"/>
</dbReference>
<dbReference type="PANTHER" id="PTHR43020">
    <property type="entry name" value="CDK5 REGULATORY SUBUNIT-ASSOCIATED PROTEIN 1"/>
    <property type="match status" value="1"/>
</dbReference>
<dbReference type="PANTHER" id="PTHR43020:SF2">
    <property type="entry name" value="MITOCHONDRIAL TRNA METHYLTHIOTRANSFERASE CDK5RAP1"/>
    <property type="match status" value="1"/>
</dbReference>
<dbReference type="Pfam" id="PF04055">
    <property type="entry name" value="Radical_SAM"/>
    <property type="match status" value="1"/>
</dbReference>
<dbReference type="Pfam" id="PF01938">
    <property type="entry name" value="TRAM"/>
    <property type="match status" value="1"/>
</dbReference>
<dbReference type="Pfam" id="PF00919">
    <property type="entry name" value="UPF0004"/>
    <property type="match status" value="1"/>
</dbReference>
<dbReference type="SFLD" id="SFLDF00273">
    <property type="entry name" value="(dimethylallyl)adenosine_tRNA"/>
    <property type="match status" value="1"/>
</dbReference>
<dbReference type="SFLD" id="SFLDG01082">
    <property type="entry name" value="B12-binding_domain_containing"/>
    <property type="match status" value="1"/>
</dbReference>
<dbReference type="SFLD" id="SFLDG01061">
    <property type="entry name" value="methylthiotransferase"/>
    <property type="match status" value="1"/>
</dbReference>
<dbReference type="SMART" id="SM00729">
    <property type="entry name" value="Elp3"/>
    <property type="match status" value="1"/>
</dbReference>
<dbReference type="SUPFAM" id="SSF102114">
    <property type="entry name" value="Radical SAM enzymes"/>
    <property type="match status" value="1"/>
</dbReference>
<dbReference type="PROSITE" id="PS51449">
    <property type="entry name" value="MTTASE_N"/>
    <property type="match status" value="1"/>
</dbReference>
<dbReference type="PROSITE" id="PS01278">
    <property type="entry name" value="MTTASE_RADICAL"/>
    <property type="match status" value="1"/>
</dbReference>
<dbReference type="PROSITE" id="PS51918">
    <property type="entry name" value="RADICAL_SAM"/>
    <property type="match status" value="1"/>
</dbReference>
<dbReference type="PROSITE" id="PS50926">
    <property type="entry name" value="TRAM"/>
    <property type="match status" value="1"/>
</dbReference>
<sequence length="445" mass="50418">MSKKLYIKTYGCQMNVYDSVKMQDLLYPFGYEPTENIEDADVIILITCHIREKAAEKTYSELGRIKKLQDTRKKQGLNSAIIVVAGCVAQAEGEEIFSRAPYVDIVVGPQSYYNLPELISKVVRHEKHLIDLDFVEEAKFDNLPEQLYPQGASSFISVQEGCDKFCTFCVVPYTRGAEFSRNVEQVYREALKVVSSGAKEITLLGQNVNAYHGKGPDDKIFTLADLLGHLAQIPNLERLRYMTSHPIDMTDDLIKLHGTEPKLMPFLHLPVQSGSNKILKAMNRKHDRDYYFDIINRLRETRPDIVLSSDFIVGFPGETDEDFEDTLDLVRRVKYGQCYSFKYSPRPGTPGATRTDQVPEHIKSERLTILQQELTAQQLAFNESCVGSIMKVLFDRNGKFDDQIIGKTPYMQSVYIQNPNKSLLGKITDVKITKAASNSLTGEVI</sequence>
<comment type="function">
    <text evidence="1">Catalyzes the methylthiolation of N6-(dimethylallyl)adenosine (i(6)A), leading to the formation of 2-methylthio-N6-(dimethylallyl)adenosine (ms(2)i(6)A) at position 37 in tRNAs that read codons beginning with uridine.</text>
</comment>
<comment type="catalytic activity">
    <reaction evidence="1">
        <text>N(6)-dimethylallyladenosine(37) in tRNA + (sulfur carrier)-SH + AH2 + 2 S-adenosyl-L-methionine = 2-methylsulfanyl-N(6)-dimethylallyladenosine(37) in tRNA + (sulfur carrier)-H + 5'-deoxyadenosine + L-methionine + A + S-adenosyl-L-homocysteine + 2 H(+)</text>
        <dbReference type="Rhea" id="RHEA:37067"/>
        <dbReference type="Rhea" id="RHEA-COMP:10375"/>
        <dbReference type="Rhea" id="RHEA-COMP:10376"/>
        <dbReference type="Rhea" id="RHEA-COMP:14737"/>
        <dbReference type="Rhea" id="RHEA-COMP:14739"/>
        <dbReference type="ChEBI" id="CHEBI:13193"/>
        <dbReference type="ChEBI" id="CHEBI:15378"/>
        <dbReference type="ChEBI" id="CHEBI:17319"/>
        <dbReference type="ChEBI" id="CHEBI:17499"/>
        <dbReference type="ChEBI" id="CHEBI:29917"/>
        <dbReference type="ChEBI" id="CHEBI:57844"/>
        <dbReference type="ChEBI" id="CHEBI:57856"/>
        <dbReference type="ChEBI" id="CHEBI:59789"/>
        <dbReference type="ChEBI" id="CHEBI:64428"/>
        <dbReference type="ChEBI" id="CHEBI:74415"/>
        <dbReference type="ChEBI" id="CHEBI:74417"/>
        <dbReference type="EC" id="2.8.4.3"/>
    </reaction>
</comment>
<comment type="cofactor">
    <cofactor evidence="1">
        <name>[4Fe-4S] cluster</name>
        <dbReference type="ChEBI" id="CHEBI:49883"/>
    </cofactor>
    <text evidence="1">Binds 2 [4Fe-4S] clusters. One cluster is coordinated with 3 cysteines and an exchangeable S-adenosyl-L-methionine.</text>
</comment>
<comment type="subunit">
    <text evidence="1">Monomer.</text>
</comment>
<comment type="subcellular location">
    <subcellularLocation>
        <location evidence="1">Cytoplasm</location>
    </subcellularLocation>
</comment>
<comment type="similarity">
    <text evidence="1">Belongs to the methylthiotransferase family. MiaB subfamily.</text>
</comment>